<proteinExistence type="evidence at protein level"/>
<keyword id="KW-0067">ATP-binding</keyword>
<keyword id="KW-1003">Cell membrane</keyword>
<keyword id="KW-0472">Membrane</keyword>
<keyword id="KW-0547">Nucleotide-binding</keyword>
<keyword id="KW-1185">Reference proteome</keyword>
<keyword id="KW-1278">Translocase</keyword>
<keyword id="KW-0813">Transport</keyword>
<feature type="chain" id="PRO_0000287961" description="Energy-coupling factor transporter ATP-binding protein EcfA1">
    <location>
        <begin position="1"/>
        <end position="272"/>
    </location>
</feature>
<feature type="domain" description="ABC transporter" evidence="2">
    <location>
        <begin position="5"/>
        <end position="239"/>
    </location>
</feature>
<feature type="active site" description="Proton acceptor" evidence="1">
    <location>
        <position position="163"/>
    </location>
</feature>
<feature type="binding site" evidence="2">
    <location>
        <begin position="37"/>
        <end position="44"/>
    </location>
    <ligand>
        <name>ATP</name>
        <dbReference type="ChEBI" id="CHEBI:30616"/>
    </ligand>
</feature>
<reference key="1">
    <citation type="journal article" date="2006" name="Proc. Natl. Acad. Sci. U.S.A.">
        <title>Comparative genomics of the lactic acid bacteria.</title>
        <authorList>
            <person name="Makarova K.S."/>
            <person name="Slesarev A."/>
            <person name="Wolf Y.I."/>
            <person name="Sorokin A."/>
            <person name="Mirkin B."/>
            <person name="Koonin E.V."/>
            <person name="Pavlov A."/>
            <person name="Pavlova N."/>
            <person name="Karamychev V."/>
            <person name="Polouchine N."/>
            <person name="Shakhova V."/>
            <person name="Grigoriev I."/>
            <person name="Lou Y."/>
            <person name="Rohksar D."/>
            <person name="Lucas S."/>
            <person name="Huang K."/>
            <person name="Goodstein D.M."/>
            <person name="Hawkins T."/>
            <person name="Plengvidhya V."/>
            <person name="Welker D."/>
            <person name="Hughes J."/>
            <person name="Goh Y."/>
            <person name="Benson A."/>
            <person name="Baldwin K."/>
            <person name="Lee J.-H."/>
            <person name="Diaz-Muniz I."/>
            <person name="Dosti B."/>
            <person name="Smeianov V."/>
            <person name="Wechter W."/>
            <person name="Barabote R."/>
            <person name="Lorca G."/>
            <person name="Altermann E."/>
            <person name="Barrangou R."/>
            <person name="Ganesan B."/>
            <person name="Xie Y."/>
            <person name="Rawsthorne H."/>
            <person name="Tamir D."/>
            <person name="Parker C."/>
            <person name="Breidt F."/>
            <person name="Broadbent J.R."/>
            <person name="Hutkins R."/>
            <person name="O'Sullivan D."/>
            <person name="Steele J."/>
            <person name="Unlu G."/>
            <person name="Saier M.H. Jr."/>
            <person name="Klaenhammer T."/>
            <person name="Richardson P."/>
            <person name="Kozyavkin S."/>
            <person name="Weimer B.C."/>
            <person name="Mills D.A."/>
        </authorList>
    </citation>
    <scope>NUCLEOTIDE SEQUENCE [LARGE SCALE GENOMIC DNA]</scope>
    <source>
        <strain>ATCC 8293 / DSM 20343 / BCRC 11652 / CCM 1803 / JCM 6124 / NCDO 523 / NBRC 100496 / NCIMB 8023 / NCTC 12954 / NRRL B-1118 / 37Y</strain>
    </source>
</reference>
<reference key="2">
    <citation type="journal article" date="2009" name="J. Bacteriol.">
        <title>A novel class of modular transporters for vitamins in prokaryotes.</title>
        <authorList>
            <person name="Rodionov D.A."/>
            <person name="Hebbeln P."/>
            <person name="Eudes A."/>
            <person name="ter Beek J."/>
            <person name="Rodionova I.A."/>
            <person name="Erkens G.B."/>
            <person name="Slotboom D.J."/>
            <person name="Gelfand M.S."/>
            <person name="Osterman A.L."/>
            <person name="Hanson A.D."/>
            <person name="Eitinger T."/>
        </authorList>
    </citation>
    <scope>FUNCTION AS A TRANSPORT COMPONENT</scope>
    <scope>SUBUNIT</scope>
    <scope>SUBCELLULAR LOCATION</scope>
    <scope>SUBSTRATES</scope>
    <scope>EXPRESSION IN E.COLI</scope>
    <source>
        <strain>ATCC 8293 / DSM 20343 / BCRC 11652 / CCM 1803 / JCM 6124 / NCDO 523 / NBRC 100496 / NCIMB 8023 / NCTC 12954 / NRRL B-1118 / 37Y</strain>
    </source>
</reference>
<reference key="3">
    <citation type="journal article" date="2009" name="J. Bacteriol.">
        <title>Two essential arginine residues in the T components of energy-coupling factor transporters.</title>
        <authorList>
            <person name="Neubauer O."/>
            <person name="Alfandega A."/>
            <person name="Schoknecht J."/>
            <person name="Sternberg U."/>
            <person name="Pohlmann A."/>
            <person name="Eitinger T."/>
        </authorList>
    </citation>
    <scope>FUNCTION AS A TRANSPORT COMPONENT</scope>
    <scope>SUBCELLULAR LOCATION</scope>
    <scope>SUBUNIT</scope>
    <scope>EXPRESSION IN E.COLI</scope>
    <source>
        <strain>ATCC 8293 / DSM 20343 / BCRC 11652 / CCM 1803 / JCM 6124 / NCDO 523 / NBRC 100496 / NCIMB 8023 / NCTC 12954 / NRRL B-1118 / 37Y</strain>
    </source>
</reference>
<accession>Q03ZL6</accession>
<sequence>MVKAIKIDNLKYSYDERSLFSDFNLDIDAGQWVALVGHNGSGKSTLAKLILGLLVAEQGDIDVFDERLTVETVHHVRSKIGMVFQNPDNQFVGATVADDVAFGLENIQVESSEMPQKIDNALTIVGMQEFKNREPHTLSGGQKQRVALASVLALQPKIIILDEATAMLDPDGRATVMETLQKLKKQFGKELTLVTITHDMDEATLADRVVVINDGQKILDGTPAEVFSQRKALHENGLELPFANELAFHLNEKPNKYMDERELIQWLSTLNK</sequence>
<name>ECFA1_LEUMM</name>
<evidence type="ECO:0000255" key="1"/>
<evidence type="ECO:0000255" key="2">
    <source>
        <dbReference type="HAMAP-Rule" id="MF_01710"/>
    </source>
</evidence>
<evidence type="ECO:0000269" key="3">
    <source>
    </source>
</evidence>
<evidence type="ECO:0000269" key="4">
    <source>
    </source>
</evidence>
<evidence type="ECO:0000305" key="5">
    <source>
    </source>
</evidence>
<evidence type="ECO:0000305" key="6">
    <source>
    </source>
</evidence>
<dbReference type="EC" id="7.-.-.-" evidence="2"/>
<dbReference type="EMBL" id="CP000414">
    <property type="protein sequence ID" value="ABJ61356.1"/>
    <property type="molecule type" value="Genomic_DNA"/>
</dbReference>
<dbReference type="RefSeq" id="WP_010282672.1">
    <property type="nucleotide sequence ID" value="NC_008531.1"/>
</dbReference>
<dbReference type="SMR" id="Q03ZL6"/>
<dbReference type="EnsemblBacteria" id="ABJ61356">
    <property type="protein sequence ID" value="ABJ61356"/>
    <property type="gene ID" value="LEUM_0225"/>
</dbReference>
<dbReference type="GeneID" id="29577452"/>
<dbReference type="KEGG" id="lme:LEUM_0225"/>
<dbReference type="eggNOG" id="COG1122">
    <property type="taxonomic scope" value="Bacteria"/>
</dbReference>
<dbReference type="HOGENOM" id="CLU_000604_1_22_9"/>
<dbReference type="Proteomes" id="UP000000362">
    <property type="component" value="Chromosome"/>
</dbReference>
<dbReference type="GO" id="GO:0043190">
    <property type="term" value="C:ATP-binding cassette (ABC) transporter complex"/>
    <property type="evidence" value="ECO:0007669"/>
    <property type="project" value="TreeGrafter"/>
</dbReference>
<dbReference type="GO" id="GO:0005524">
    <property type="term" value="F:ATP binding"/>
    <property type="evidence" value="ECO:0007669"/>
    <property type="project" value="UniProtKB-KW"/>
</dbReference>
<dbReference type="GO" id="GO:0016887">
    <property type="term" value="F:ATP hydrolysis activity"/>
    <property type="evidence" value="ECO:0007669"/>
    <property type="project" value="InterPro"/>
</dbReference>
<dbReference type="GO" id="GO:0042626">
    <property type="term" value="F:ATPase-coupled transmembrane transporter activity"/>
    <property type="evidence" value="ECO:0007669"/>
    <property type="project" value="TreeGrafter"/>
</dbReference>
<dbReference type="CDD" id="cd03225">
    <property type="entry name" value="ABC_cobalt_CbiO_domain1"/>
    <property type="match status" value="1"/>
</dbReference>
<dbReference type="FunFam" id="3.40.50.300:FF:000224">
    <property type="entry name" value="Energy-coupling factor transporter ATP-binding protein EcfA"/>
    <property type="match status" value="1"/>
</dbReference>
<dbReference type="Gene3D" id="3.40.50.300">
    <property type="entry name" value="P-loop containing nucleotide triphosphate hydrolases"/>
    <property type="match status" value="1"/>
</dbReference>
<dbReference type="InterPro" id="IPR003593">
    <property type="entry name" value="AAA+_ATPase"/>
</dbReference>
<dbReference type="InterPro" id="IPR003439">
    <property type="entry name" value="ABC_transporter-like_ATP-bd"/>
</dbReference>
<dbReference type="InterPro" id="IPR017871">
    <property type="entry name" value="ABC_transporter-like_CS"/>
</dbReference>
<dbReference type="InterPro" id="IPR015856">
    <property type="entry name" value="ABC_transpr_CbiO/EcfA_su"/>
</dbReference>
<dbReference type="InterPro" id="IPR050095">
    <property type="entry name" value="ECF_ABC_transporter_ATP-bd"/>
</dbReference>
<dbReference type="InterPro" id="IPR030947">
    <property type="entry name" value="EcfA_1"/>
</dbReference>
<dbReference type="InterPro" id="IPR027417">
    <property type="entry name" value="P-loop_NTPase"/>
</dbReference>
<dbReference type="NCBIfam" id="TIGR04520">
    <property type="entry name" value="ECF_ATPase_1"/>
    <property type="match status" value="1"/>
</dbReference>
<dbReference type="NCBIfam" id="NF010167">
    <property type="entry name" value="PRK13648.1"/>
    <property type="match status" value="1"/>
</dbReference>
<dbReference type="PANTHER" id="PTHR43553:SF24">
    <property type="entry name" value="ENERGY-COUPLING FACTOR TRANSPORTER ATP-BINDING PROTEIN ECFA1"/>
    <property type="match status" value="1"/>
</dbReference>
<dbReference type="PANTHER" id="PTHR43553">
    <property type="entry name" value="HEAVY METAL TRANSPORTER"/>
    <property type="match status" value="1"/>
</dbReference>
<dbReference type="Pfam" id="PF00005">
    <property type="entry name" value="ABC_tran"/>
    <property type="match status" value="1"/>
</dbReference>
<dbReference type="SMART" id="SM00382">
    <property type="entry name" value="AAA"/>
    <property type="match status" value="1"/>
</dbReference>
<dbReference type="SUPFAM" id="SSF52540">
    <property type="entry name" value="P-loop containing nucleoside triphosphate hydrolases"/>
    <property type="match status" value="1"/>
</dbReference>
<dbReference type="PROSITE" id="PS00211">
    <property type="entry name" value="ABC_TRANSPORTER_1"/>
    <property type="match status" value="1"/>
</dbReference>
<dbReference type="PROSITE" id="PS50893">
    <property type="entry name" value="ABC_TRANSPORTER_2"/>
    <property type="match status" value="1"/>
</dbReference>
<dbReference type="PROSITE" id="PS51246">
    <property type="entry name" value="CBIO"/>
    <property type="match status" value="1"/>
</dbReference>
<organism>
    <name type="scientific">Leuconostoc mesenteroides subsp. mesenteroides (strain ATCC 8293 / DSM 20343 / BCRC 11652 / CCM 1803 / JCM 6124 / NCDO 523 / NBRC 100496 / NCIMB 8023 / NCTC 12954 / NRRL B-1118 / 37Y)</name>
    <dbReference type="NCBI Taxonomy" id="203120"/>
    <lineage>
        <taxon>Bacteria</taxon>
        <taxon>Bacillati</taxon>
        <taxon>Bacillota</taxon>
        <taxon>Bacilli</taxon>
        <taxon>Lactobacillales</taxon>
        <taxon>Lactobacillaceae</taxon>
        <taxon>Leuconostoc</taxon>
    </lineage>
</organism>
<comment type="function">
    <text evidence="2 3 4">ATP-binding (A) component of a common energy-coupling factor (ECF) ABC-transporter complex. Unlike classic ABC transporters this ECF transporter provides the energy necessary to transport a number of different substrates including 5-formyltetrahydrofolate, pantothenate and riboflavin. Expression of the complex plus FolT in E.coli allows 5-formyltetrahydrofolate uptake; 5-formyltetrahydrofolate is not taken up in the absence of FolT or the EcfA1A2T complex.</text>
</comment>
<comment type="subunit">
    <text evidence="3 4">Forms a stable energy-coupling factor (ECF) transporter complex probably composed of 2 membrane-embedded substrate-binding proteins (S component), 2 ATP-binding proteins (A component) and 2 transmembrane proteins (T component). This complex interacts with a number of substrate-specific components, including FolT, PanT and RibU for 5-formyltetrahydrofolate, pantothenate and riboflavin respectively.</text>
</comment>
<comment type="subcellular location">
    <subcellularLocation>
        <location evidence="5 6">Cell membrane</location>
        <topology evidence="5 6">Peripheral membrane protein</topology>
    </subcellularLocation>
</comment>
<comment type="similarity">
    <text evidence="2">Belongs to the ABC transporter superfamily. Energy-coupling factor EcfA family.</text>
</comment>
<protein>
    <recommendedName>
        <fullName evidence="2">Energy-coupling factor transporter ATP-binding protein EcfA1</fullName>
        <shortName evidence="2">ECF transporter A component EcfA1</shortName>
        <ecNumber evidence="2">7.-.-.-</ecNumber>
    </recommendedName>
</protein>
<gene>
    <name evidence="2" type="primary">ecfA1</name>
    <name type="synonym">cbiO1</name>
    <name type="synonym">ecfA</name>
    <name type="ordered locus">LEUM_0225</name>
</gene>